<protein>
    <recommendedName>
        <fullName evidence="1">Fe/S biogenesis protein NfuA</fullName>
    </recommendedName>
</protein>
<feature type="chain" id="PRO_0000292089" description="Fe/S biogenesis protein NfuA">
    <location>
        <begin position="1"/>
        <end position="191"/>
    </location>
</feature>
<feature type="binding site" evidence="1">
    <location>
        <position position="149"/>
    </location>
    <ligand>
        <name>[4Fe-4S] cluster</name>
        <dbReference type="ChEBI" id="CHEBI:49883"/>
    </ligand>
</feature>
<feature type="binding site" evidence="1">
    <location>
        <position position="152"/>
    </location>
    <ligand>
        <name>[4Fe-4S] cluster</name>
        <dbReference type="ChEBI" id="CHEBI:49883"/>
    </ligand>
</feature>
<comment type="function">
    <text evidence="1">Involved in iron-sulfur cluster biogenesis. Binds a 4Fe-4S cluster, can transfer this cluster to apoproteins, and thereby intervenes in the maturation of Fe/S proteins. Could also act as a scaffold/chaperone for damaged Fe/S proteins.</text>
</comment>
<comment type="cofactor">
    <cofactor evidence="1">
        <name>[4Fe-4S] cluster</name>
        <dbReference type="ChEBI" id="CHEBI:49883"/>
    </cofactor>
    <text evidence="1">Binds 1 [4Fe-4S] cluster per subunit. The cluster is presumably bound at the interface of two monomers.</text>
</comment>
<comment type="subunit">
    <text evidence="1">Homodimer.</text>
</comment>
<comment type="similarity">
    <text evidence="1">Belongs to the NfuA family.</text>
</comment>
<organism>
    <name type="scientific">Escherichia coli O1:K1 / APEC</name>
    <dbReference type="NCBI Taxonomy" id="405955"/>
    <lineage>
        <taxon>Bacteria</taxon>
        <taxon>Pseudomonadati</taxon>
        <taxon>Pseudomonadota</taxon>
        <taxon>Gammaproteobacteria</taxon>
        <taxon>Enterobacterales</taxon>
        <taxon>Enterobacteriaceae</taxon>
        <taxon>Escherichia</taxon>
    </lineage>
</organism>
<evidence type="ECO:0000255" key="1">
    <source>
        <dbReference type="HAMAP-Rule" id="MF_01637"/>
    </source>
</evidence>
<name>NFUA_ECOK1</name>
<sequence>MIRISDAAQAHFAKLLANQEEGTQIRVFVINPGTPNAECGVSYCPPDAVEATDTALKFDLLTAYVDELSAPYLEDAEIDFVTDQLGSQLTLKAPNAKMRKVADDAPLMERVEYMLQSQINPQLAGHGGRVSLMEITEDGYAILQFGGGCNGCSMVDVTLKEGIEKQLLNEFPELKGVRDLTEHQRGEHSYY</sequence>
<dbReference type="EMBL" id="CP000468">
    <property type="protein sequence ID" value="ABJ02878.1"/>
    <property type="molecule type" value="Genomic_DNA"/>
</dbReference>
<dbReference type="RefSeq" id="WP_000619389.1">
    <property type="nucleotide sequence ID" value="NZ_CADILS010000030.1"/>
</dbReference>
<dbReference type="SMR" id="A1AGT8"/>
<dbReference type="GeneID" id="93778582"/>
<dbReference type="KEGG" id="ecv:APECO1_3052"/>
<dbReference type="HOGENOM" id="CLU_094569_0_0_6"/>
<dbReference type="Proteomes" id="UP000008216">
    <property type="component" value="Chromosome"/>
</dbReference>
<dbReference type="GO" id="GO:0051539">
    <property type="term" value="F:4 iron, 4 sulfur cluster binding"/>
    <property type="evidence" value="ECO:0007669"/>
    <property type="project" value="UniProtKB-UniRule"/>
</dbReference>
<dbReference type="GO" id="GO:0005506">
    <property type="term" value="F:iron ion binding"/>
    <property type="evidence" value="ECO:0007669"/>
    <property type="project" value="InterPro"/>
</dbReference>
<dbReference type="GO" id="GO:0016226">
    <property type="term" value="P:iron-sulfur cluster assembly"/>
    <property type="evidence" value="ECO:0007669"/>
    <property type="project" value="UniProtKB-UniRule"/>
</dbReference>
<dbReference type="GO" id="GO:0051604">
    <property type="term" value="P:protein maturation"/>
    <property type="evidence" value="ECO:0007669"/>
    <property type="project" value="UniProtKB-UniRule"/>
</dbReference>
<dbReference type="FunFam" id="2.60.300.12:FF:000004">
    <property type="entry name" value="Fe/S biogenesis protein NfuA"/>
    <property type="match status" value="1"/>
</dbReference>
<dbReference type="FunFam" id="3.30.300.130:FF:000002">
    <property type="entry name" value="Fe/S biogenesis protein NfuA"/>
    <property type="match status" value="1"/>
</dbReference>
<dbReference type="Gene3D" id="3.30.300.130">
    <property type="entry name" value="Fe-S cluster assembly (FSCA)"/>
    <property type="match status" value="1"/>
</dbReference>
<dbReference type="Gene3D" id="2.60.300.12">
    <property type="entry name" value="HesB-like domain"/>
    <property type="match status" value="1"/>
</dbReference>
<dbReference type="HAMAP" id="MF_01637">
    <property type="entry name" value="Fe_S_biogen_NfuA"/>
    <property type="match status" value="1"/>
</dbReference>
<dbReference type="InterPro" id="IPR017726">
    <property type="entry name" value="Fe/S_biogenesis_protein_NfuA"/>
</dbReference>
<dbReference type="InterPro" id="IPR000361">
    <property type="entry name" value="FeS_biogenesis"/>
</dbReference>
<dbReference type="InterPro" id="IPR034904">
    <property type="entry name" value="FSCA_dom_sf"/>
</dbReference>
<dbReference type="InterPro" id="IPR035903">
    <property type="entry name" value="HesB-like_dom_sf"/>
</dbReference>
<dbReference type="InterPro" id="IPR001075">
    <property type="entry name" value="NIF_FeS_clus_asmbl_NifU_C"/>
</dbReference>
<dbReference type="NCBIfam" id="NF008392">
    <property type="entry name" value="PRK11190.1"/>
    <property type="match status" value="1"/>
</dbReference>
<dbReference type="NCBIfam" id="TIGR03341">
    <property type="entry name" value="YhgI_GntY"/>
    <property type="match status" value="1"/>
</dbReference>
<dbReference type="PANTHER" id="PTHR11178:SF51">
    <property type="entry name" value="FE_S BIOGENESIS PROTEIN NFUA"/>
    <property type="match status" value="1"/>
</dbReference>
<dbReference type="PANTHER" id="PTHR11178">
    <property type="entry name" value="IRON-SULFUR CLUSTER SCAFFOLD PROTEIN NFU-RELATED"/>
    <property type="match status" value="1"/>
</dbReference>
<dbReference type="Pfam" id="PF01521">
    <property type="entry name" value="Fe-S_biosyn"/>
    <property type="match status" value="1"/>
</dbReference>
<dbReference type="Pfam" id="PF01106">
    <property type="entry name" value="NifU"/>
    <property type="match status" value="1"/>
</dbReference>
<dbReference type="SUPFAM" id="SSF117916">
    <property type="entry name" value="Fe-S cluster assembly (FSCA) domain-like"/>
    <property type="match status" value="1"/>
</dbReference>
<dbReference type="SUPFAM" id="SSF89360">
    <property type="entry name" value="HesB-like domain"/>
    <property type="match status" value="1"/>
</dbReference>
<proteinExistence type="inferred from homology"/>
<accession>A1AGT8</accession>
<reference key="1">
    <citation type="journal article" date="2007" name="J. Bacteriol.">
        <title>The genome sequence of avian pathogenic Escherichia coli strain O1:K1:H7 shares strong similarities with human extraintestinal pathogenic E. coli genomes.</title>
        <authorList>
            <person name="Johnson T.J."/>
            <person name="Kariyawasam S."/>
            <person name="Wannemuehler Y."/>
            <person name="Mangiamele P."/>
            <person name="Johnson S.J."/>
            <person name="Doetkott C."/>
            <person name="Skyberg J.A."/>
            <person name="Lynne A.M."/>
            <person name="Johnson J.R."/>
            <person name="Nolan L.K."/>
        </authorList>
    </citation>
    <scope>NUCLEOTIDE SEQUENCE [LARGE SCALE GENOMIC DNA]</scope>
</reference>
<keyword id="KW-0004">4Fe-4S</keyword>
<keyword id="KW-0408">Iron</keyword>
<keyword id="KW-0411">Iron-sulfur</keyword>
<keyword id="KW-0479">Metal-binding</keyword>
<keyword id="KW-1185">Reference proteome</keyword>
<gene>
    <name evidence="1" type="primary">nfuA</name>
    <name type="ordered locus">Ecok1_33840</name>
    <name type="ORF">APECO1_3052</name>
</gene>